<organism>
    <name type="scientific">Shigella boydii serotype 18 (strain CDC 3083-94 / BS512)</name>
    <dbReference type="NCBI Taxonomy" id="344609"/>
    <lineage>
        <taxon>Bacteria</taxon>
        <taxon>Pseudomonadati</taxon>
        <taxon>Pseudomonadota</taxon>
        <taxon>Gammaproteobacteria</taxon>
        <taxon>Enterobacterales</taxon>
        <taxon>Enterobacteriaceae</taxon>
        <taxon>Shigella</taxon>
    </lineage>
</organism>
<sequence>MSIQNEMPGYNEMNQYLNQQGTGLTPAEMHGLISGMICGGNDDSSWLPLLHDLTNEGMAFGHELAQALRKMHSATSDALQDDGFLFQLYLPDGDDVSVFDRADALAGWVNHFLLGLGVTQPKLDKVTGETGEAIDDLRNIAQLGYDEDEDQEELEMSLEEIIEYVRVAALLCHDTFTHPQPTAPEVQKPTLH</sequence>
<reference key="1">
    <citation type="submission" date="2008-05" db="EMBL/GenBank/DDBJ databases">
        <title>Complete sequence of Shigella boydii serotype 18 strain BS512.</title>
        <authorList>
            <person name="Rasko D.A."/>
            <person name="Rosovitz M."/>
            <person name="Maurelli A.T."/>
            <person name="Myers G."/>
            <person name="Seshadri R."/>
            <person name="Cer R."/>
            <person name="Jiang L."/>
            <person name="Ravel J."/>
            <person name="Sebastian Y."/>
        </authorList>
    </citation>
    <scope>NUCLEOTIDE SEQUENCE [LARGE SCALE GENOMIC DNA]</scope>
    <source>
        <strain>CDC 3083-94 / BS512</strain>
    </source>
</reference>
<evidence type="ECO:0000255" key="1">
    <source>
        <dbReference type="HAMAP-Rule" id="MF_00346"/>
    </source>
</evidence>
<keyword id="KW-1185">Reference proteome</keyword>
<feature type="chain" id="PRO_1000120485" description="UPF0149 protein YgfB">
    <location>
        <begin position="1"/>
        <end position="192"/>
    </location>
</feature>
<name>YGFB_SHIB3</name>
<gene>
    <name evidence="1" type="primary">ygfB</name>
    <name type="ordered locus">SbBS512_E3330</name>
</gene>
<proteinExistence type="inferred from homology"/>
<dbReference type="EMBL" id="CP001063">
    <property type="protein sequence ID" value="ACD06692.1"/>
    <property type="molecule type" value="Genomic_DNA"/>
</dbReference>
<dbReference type="RefSeq" id="WP_001295378.1">
    <property type="nucleotide sequence ID" value="NC_010658.1"/>
</dbReference>
<dbReference type="SMR" id="B2U0S6"/>
<dbReference type="STRING" id="344609.SbBS512_E3330"/>
<dbReference type="GeneID" id="93779092"/>
<dbReference type="KEGG" id="sbc:SbBS512_E3330"/>
<dbReference type="HOGENOM" id="CLU_085336_1_0_6"/>
<dbReference type="Proteomes" id="UP000001030">
    <property type="component" value="Chromosome"/>
</dbReference>
<dbReference type="GO" id="GO:0005829">
    <property type="term" value="C:cytosol"/>
    <property type="evidence" value="ECO:0007669"/>
    <property type="project" value="TreeGrafter"/>
</dbReference>
<dbReference type="FunFam" id="1.20.120.740:FF:000001">
    <property type="entry name" value="UPF0149 protein YgfB"/>
    <property type="match status" value="1"/>
</dbReference>
<dbReference type="Gene3D" id="1.20.120.740">
    <property type="entry name" value="YgfB uncharacterised protein family UPF0149, PF03695"/>
    <property type="match status" value="1"/>
</dbReference>
<dbReference type="HAMAP" id="MF_00346">
    <property type="entry name" value="UPF0149"/>
    <property type="match status" value="1"/>
</dbReference>
<dbReference type="InterPro" id="IPR011978">
    <property type="entry name" value="YgfB-like"/>
</dbReference>
<dbReference type="InterPro" id="IPR036255">
    <property type="entry name" value="YgfB-like_sf"/>
</dbReference>
<dbReference type="NCBIfam" id="NF002477">
    <property type="entry name" value="PRK01736.1"/>
    <property type="match status" value="1"/>
</dbReference>
<dbReference type="NCBIfam" id="TIGR02292">
    <property type="entry name" value="ygfB_yecA"/>
    <property type="match status" value="1"/>
</dbReference>
<dbReference type="PANTHER" id="PTHR37528">
    <property type="entry name" value="UPF0149 PROTEIN YGFB"/>
    <property type="match status" value="1"/>
</dbReference>
<dbReference type="PANTHER" id="PTHR37528:SF1">
    <property type="entry name" value="UPF0149 PROTEIN YGFB"/>
    <property type="match status" value="1"/>
</dbReference>
<dbReference type="Pfam" id="PF03695">
    <property type="entry name" value="UPF0149"/>
    <property type="match status" value="1"/>
</dbReference>
<dbReference type="SUPFAM" id="SSF101327">
    <property type="entry name" value="YgfB-like"/>
    <property type="match status" value="1"/>
</dbReference>
<accession>B2U0S6</accession>
<protein>
    <recommendedName>
        <fullName evidence="1">UPF0149 protein YgfB</fullName>
    </recommendedName>
</protein>
<comment type="similarity">
    <text evidence="1">Belongs to the UPF0149 family.</text>
</comment>